<reference key="1">
    <citation type="journal article" date="2004" name="Proc. Natl. Acad. Sci. U.S.A.">
        <title>Genomic analysis of Bacteroides fragilis reveals extensive DNA inversions regulating cell surface adaptation.</title>
        <authorList>
            <person name="Kuwahara T."/>
            <person name="Yamashita A."/>
            <person name="Hirakawa H."/>
            <person name="Nakayama H."/>
            <person name="Toh H."/>
            <person name="Okada N."/>
            <person name="Kuhara S."/>
            <person name="Hattori M."/>
            <person name="Hayashi T."/>
            <person name="Ohnishi Y."/>
        </authorList>
    </citation>
    <scope>NUCLEOTIDE SEQUENCE [LARGE SCALE GENOMIC DNA]</scope>
    <source>
        <strain>YCH46</strain>
    </source>
</reference>
<accession>Q64X24</accession>
<feature type="chain" id="PRO_0000243260" description="Dephospho-CoA kinase">
    <location>
        <begin position="1"/>
        <end position="205"/>
    </location>
</feature>
<feature type="domain" description="DPCK" evidence="1">
    <location>
        <begin position="4"/>
        <end position="203"/>
    </location>
</feature>
<feature type="binding site" evidence="1">
    <location>
        <begin position="12"/>
        <end position="17"/>
    </location>
    <ligand>
        <name>ATP</name>
        <dbReference type="ChEBI" id="CHEBI:30616"/>
    </ligand>
</feature>
<evidence type="ECO:0000255" key="1">
    <source>
        <dbReference type="HAMAP-Rule" id="MF_00376"/>
    </source>
</evidence>
<sequence>MAIKIGITGGIGSGKSVVSHLLEVMGVPVYISDEESKKVVATDPVIRKELCDLVGEEVFSGGKLNKTLLATYLFASSTHASQVNGIIHPRVKEHFRQWSSHKECLDIIGMESAILIESGFADEVDCIVMVYAPLELRVERAVRRDNASCEQIMQRIRSQMSDEEKCERASFVIINDGEKPLIPQILELIAFLYQKIHYLCSAKNN</sequence>
<gene>
    <name evidence="1" type="primary">coaE</name>
    <name type="ordered locus">BF1202</name>
</gene>
<dbReference type="EC" id="2.7.1.24" evidence="1"/>
<dbReference type="EMBL" id="AP006841">
    <property type="protein sequence ID" value="BAD47952.1"/>
    <property type="molecule type" value="Genomic_DNA"/>
</dbReference>
<dbReference type="RefSeq" id="WP_005785766.1">
    <property type="nucleotide sequence ID" value="NZ_UYXF01000002.1"/>
</dbReference>
<dbReference type="RefSeq" id="YP_098486.1">
    <property type="nucleotide sequence ID" value="NC_006347.1"/>
</dbReference>
<dbReference type="SMR" id="Q64X24"/>
<dbReference type="STRING" id="295405.BF1202"/>
<dbReference type="KEGG" id="bfr:BF1202"/>
<dbReference type="PATRIC" id="fig|295405.11.peg.1190"/>
<dbReference type="HOGENOM" id="CLU_057180_3_1_10"/>
<dbReference type="OrthoDB" id="9812943at2"/>
<dbReference type="UniPathway" id="UPA00241">
    <property type="reaction ID" value="UER00356"/>
</dbReference>
<dbReference type="Proteomes" id="UP000002197">
    <property type="component" value="Chromosome"/>
</dbReference>
<dbReference type="GO" id="GO:0005737">
    <property type="term" value="C:cytoplasm"/>
    <property type="evidence" value="ECO:0007669"/>
    <property type="project" value="UniProtKB-SubCell"/>
</dbReference>
<dbReference type="GO" id="GO:0005524">
    <property type="term" value="F:ATP binding"/>
    <property type="evidence" value="ECO:0007669"/>
    <property type="project" value="UniProtKB-UniRule"/>
</dbReference>
<dbReference type="GO" id="GO:0004140">
    <property type="term" value="F:dephospho-CoA kinase activity"/>
    <property type="evidence" value="ECO:0007669"/>
    <property type="project" value="UniProtKB-UniRule"/>
</dbReference>
<dbReference type="GO" id="GO:0015937">
    <property type="term" value="P:coenzyme A biosynthetic process"/>
    <property type="evidence" value="ECO:0007669"/>
    <property type="project" value="UniProtKB-UniRule"/>
</dbReference>
<dbReference type="CDD" id="cd02022">
    <property type="entry name" value="DPCK"/>
    <property type="match status" value="1"/>
</dbReference>
<dbReference type="Gene3D" id="3.40.50.300">
    <property type="entry name" value="P-loop containing nucleotide triphosphate hydrolases"/>
    <property type="match status" value="1"/>
</dbReference>
<dbReference type="HAMAP" id="MF_00376">
    <property type="entry name" value="Dephospho_CoA_kinase"/>
    <property type="match status" value="1"/>
</dbReference>
<dbReference type="InterPro" id="IPR001977">
    <property type="entry name" value="Depp_CoAkinase"/>
</dbReference>
<dbReference type="InterPro" id="IPR027417">
    <property type="entry name" value="P-loop_NTPase"/>
</dbReference>
<dbReference type="NCBIfam" id="TIGR00152">
    <property type="entry name" value="dephospho-CoA kinase"/>
    <property type="match status" value="1"/>
</dbReference>
<dbReference type="PANTHER" id="PTHR10695:SF46">
    <property type="entry name" value="BIFUNCTIONAL COENZYME A SYNTHASE-RELATED"/>
    <property type="match status" value="1"/>
</dbReference>
<dbReference type="PANTHER" id="PTHR10695">
    <property type="entry name" value="DEPHOSPHO-COA KINASE-RELATED"/>
    <property type="match status" value="1"/>
</dbReference>
<dbReference type="Pfam" id="PF01121">
    <property type="entry name" value="CoaE"/>
    <property type="match status" value="1"/>
</dbReference>
<dbReference type="SUPFAM" id="SSF52540">
    <property type="entry name" value="P-loop containing nucleoside triphosphate hydrolases"/>
    <property type="match status" value="1"/>
</dbReference>
<dbReference type="PROSITE" id="PS51219">
    <property type="entry name" value="DPCK"/>
    <property type="match status" value="1"/>
</dbReference>
<name>COAE_BACFR</name>
<protein>
    <recommendedName>
        <fullName evidence="1">Dephospho-CoA kinase</fullName>
        <ecNumber evidence="1">2.7.1.24</ecNumber>
    </recommendedName>
    <alternativeName>
        <fullName evidence="1">Dephosphocoenzyme A kinase</fullName>
    </alternativeName>
</protein>
<proteinExistence type="inferred from homology"/>
<keyword id="KW-0067">ATP-binding</keyword>
<keyword id="KW-0173">Coenzyme A biosynthesis</keyword>
<keyword id="KW-0963">Cytoplasm</keyword>
<keyword id="KW-0418">Kinase</keyword>
<keyword id="KW-0547">Nucleotide-binding</keyword>
<keyword id="KW-0808">Transferase</keyword>
<comment type="function">
    <text evidence="1">Catalyzes the phosphorylation of the 3'-hydroxyl group of dephosphocoenzyme A to form coenzyme A.</text>
</comment>
<comment type="catalytic activity">
    <reaction evidence="1">
        <text>3'-dephospho-CoA + ATP = ADP + CoA + H(+)</text>
        <dbReference type="Rhea" id="RHEA:18245"/>
        <dbReference type="ChEBI" id="CHEBI:15378"/>
        <dbReference type="ChEBI" id="CHEBI:30616"/>
        <dbReference type="ChEBI" id="CHEBI:57287"/>
        <dbReference type="ChEBI" id="CHEBI:57328"/>
        <dbReference type="ChEBI" id="CHEBI:456216"/>
        <dbReference type="EC" id="2.7.1.24"/>
    </reaction>
</comment>
<comment type="pathway">
    <text evidence="1">Cofactor biosynthesis; coenzyme A biosynthesis; CoA from (R)-pantothenate: step 5/5.</text>
</comment>
<comment type="subcellular location">
    <subcellularLocation>
        <location evidence="1">Cytoplasm</location>
    </subcellularLocation>
</comment>
<comment type="similarity">
    <text evidence="1">Belongs to the CoaE family.</text>
</comment>
<organism>
    <name type="scientific">Bacteroides fragilis (strain YCH46)</name>
    <dbReference type="NCBI Taxonomy" id="295405"/>
    <lineage>
        <taxon>Bacteria</taxon>
        <taxon>Pseudomonadati</taxon>
        <taxon>Bacteroidota</taxon>
        <taxon>Bacteroidia</taxon>
        <taxon>Bacteroidales</taxon>
        <taxon>Bacteroidaceae</taxon>
        <taxon>Bacteroides</taxon>
    </lineage>
</organism>